<protein>
    <recommendedName>
        <fullName evidence="1">5-oxoprolinase subunit A</fullName>
        <shortName evidence="1">5-OPase subunit A</shortName>
        <ecNumber evidence="1">3.5.2.9</ecNumber>
    </recommendedName>
    <alternativeName>
        <fullName evidence="1">5-oxoprolinase (ATP-hydrolyzing) subunit A</fullName>
    </alternativeName>
</protein>
<feature type="chain" id="PRO_1000083125" description="5-oxoprolinase subunit A">
    <location>
        <begin position="1"/>
        <end position="250"/>
    </location>
</feature>
<evidence type="ECO:0000255" key="1">
    <source>
        <dbReference type="HAMAP-Rule" id="MF_00691"/>
    </source>
</evidence>
<accession>A5ITD0</accession>
<name>PXPA_STAA9</name>
<comment type="function">
    <text evidence="1">Catalyzes the cleavage of 5-oxoproline to form L-glutamate coupled to the hydrolysis of ATP to ADP and inorganic phosphate.</text>
</comment>
<comment type="catalytic activity">
    <reaction evidence="1">
        <text>5-oxo-L-proline + ATP + 2 H2O = L-glutamate + ADP + phosphate + H(+)</text>
        <dbReference type="Rhea" id="RHEA:10348"/>
        <dbReference type="ChEBI" id="CHEBI:15377"/>
        <dbReference type="ChEBI" id="CHEBI:15378"/>
        <dbReference type="ChEBI" id="CHEBI:29985"/>
        <dbReference type="ChEBI" id="CHEBI:30616"/>
        <dbReference type="ChEBI" id="CHEBI:43474"/>
        <dbReference type="ChEBI" id="CHEBI:58402"/>
        <dbReference type="ChEBI" id="CHEBI:456216"/>
        <dbReference type="EC" id="3.5.2.9"/>
    </reaction>
</comment>
<comment type="subunit">
    <text evidence="1">Forms a complex composed of PxpA, PxpB and PxpC.</text>
</comment>
<comment type="similarity">
    <text evidence="1">Belongs to the LamB/PxpA family.</text>
</comment>
<gene>
    <name evidence="1" type="primary">pxpA</name>
    <name type="ordered locus">SaurJH9_1662</name>
</gene>
<keyword id="KW-0067">ATP-binding</keyword>
<keyword id="KW-0378">Hydrolase</keyword>
<keyword id="KW-0547">Nucleotide-binding</keyword>
<dbReference type="EC" id="3.5.2.9" evidence="1"/>
<dbReference type="EMBL" id="CP000703">
    <property type="protein sequence ID" value="ABQ49453.1"/>
    <property type="molecule type" value="Genomic_DNA"/>
</dbReference>
<dbReference type="RefSeq" id="WP_001261793.1">
    <property type="nucleotide sequence ID" value="NC_009487.1"/>
</dbReference>
<dbReference type="SMR" id="A5ITD0"/>
<dbReference type="KEGG" id="saj:SaurJH9_1662"/>
<dbReference type="HOGENOM" id="CLU_069535_0_0_9"/>
<dbReference type="GO" id="GO:0017168">
    <property type="term" value="F:5-oxoprolinase (ATP-hydrolyzing) activity"/>
    <property type="evidence" value="ECO:0007669"/>
    <property type="project" value="UniProtKB-UniRule"/>
</dbReference>
<dbReference type="GO" id="GO:0005524">
    <property type="term" value="F:ATP binding"/>
    <property type="evidence" value="ECO:0007669"/>
    <property type="project" value="UniProtKB-UniRule"/>
</dbReference>
<dbReference type="GO" id="GO:0005975">
    <property type="term" value="P:carbohydrate metabolic process"/>
    <property type="evidence" value="ECO:0007669"/>
    <property type="project" value="InterPro"/>
</dbReference>
<dbReference type="CDD" id="cd10787">
    <property type="entry name" value="LamB_YcsF_like"/>
    <property type="match status" value="1"/>
</dbReference>
<dbReference type="Gene3D" id="3.20.20.370">
    <property type="entry name" value="Glycoside hydrolase/deacetylase"/>
    <property type="match status" value="1"/>
</dbReference>
<dbReference type="HAMAP" id="MF_00691">
    <property type="entry name" value="PxpA"/>
    <property type="match status" value="1"/>
</dbReference>
<dbReference type="InterPro" id="IPR011330">
    <property type="entry name" value="Glyco_hydro/deAcase_b/a-brl"/>
</dbReference>
<dbReference type="InterPro" id="IPR005501">
    <property type="entry name" value="LamB/YcsF/PxpA-like"/>
</dbReference>
<dbReference type="NCBIfam" id="NF003813">
    <property type="entry name" value="PRK05406.1-2"/>
    <property type="match status" value="1"/>
</dbReference>
<dbReference type="NCBIfam" id="NF003814">
    <property type="entry name" value="PRK05406.1-3"/>
    <property type="match status" value="1"/>
</dbReference>
<dbReference type="NCBIfam" id="NF003816">
    <property type="entry name" value="PRK05406.1-5"/>
    <property type="match status" value="1"/>
</dbReference>
<dbReference type="PANTHER" id="PTHR30292:SF0">
    <property type="entry name" value="5-OXOPROLINASE SUBUNIT A"/>
    <property type="match status" value="1"/>
</dbReference>
<dbReference type="PANTHER" id="PTHR30292">
    <property type="entry name" value="UNCHARACTERIZED PROTEIN YBGL-RELATED"/>
    <property type="match status" value="1"/>
</dbReference>
<dbReference type="Pfam" id="PF03746">
    <property type="entry name" value="LamB_YcsF"/>
    <property type="match status" value="1"/>
</dbReference>
<dbReference type="SUPFAM" id="SSF88713">
    <property type="entry name" value="Glycoside hydrolase/deacetylase"/>
    <property type="match status" value="1"/>
</dbReference>
<proteinExistence type="inferred from homology"/>
<reference key="1">
    <citation type="submission" date="2007-05" db="EMBL/GenBank/DDBJ databases">
        <title>Complete sequence of chromosome of Staphylococcus aureus subsp. aureus JH9.</title>
        <authorList>
            <consortium name="US DOE Joint Genome Institute"/>
            <person name="Copeland A."/>
            <person name="Lucas S."/>
            <person name="Lapidus A."/>
            <person name="Barry K."/>
            <person name="Detter J.C."/>
            <person name="Glavina del Rio T."/>
            <person name="Hammon N."/>
            <person name="Israni S."/>
            <person name="Pitluck S."/>
            <person name="Chain P."/>
            <person name="Malfatti S."/>
            <person name="Shin M."/>
            <person name="Vergez L."/>
            <person name="Schmutz J."/>
            <person name="Larimer F."/>
            <person name="Land M."/>
            <person name="Hauser L."/>
            <person name="Kyrpides N."/>
            <person name="Kim E."/>
            <person name="Tomasz A."/>
            <person name="Richardson P."/>
        </authorList>
    </citation>
    <scope>NUCLEOTIDE SEQUENCE [LARGE SCALE GENOMIC DNA]</scope>
    <source>
        <strain>JH9</strain>
    </source>
</reference>
<sequence>MRVDLNCDLGEAFGNYSFGGDHQIIPLITSANVACGFHAGDENVMNETVKLAKAHNVAVGAHPGLPDLKGFGRRNIDISNDEIYNLMIYQLGALQGFCRIHQLKINHVKPHGALYQMGAKDREIANVIAQAVYDFDPSLVLVGLANSYLISEAKNVGLITASEVFADRRYEDDGQLVSRKESDAVITDTDEALKQVLKMVKENKVISKNNKEVTLQADTICVHGDGEHALLFVSKIREILMKEGIDIQSL</sequence>
<organism>
    <name type="scientific">Staphylococcus aureus (strain JH9)</name>
    <dbReference type="NCBI Taxonomy" id="359786"/>
    <lineage>
        <taxon>Bacteria</taxon>
        <taxon>Bacillati</taxon>
        <taxon>Bacillota</taxon>
        <taxon>Bacilli</taxon>
        <taxon>Bacillales</taxon>
        <taxon>Staphylococcaceae</taxon>
        <taxon>Staphylococcus</taxon>
    </lineage>
</organism>